<sequence>MNTQKRQQIRTEIRKIRANLTALQQHQAEQSVTQHALNLIEQRQAKNIALYFSFDGEISTKALIQSLWMQNKNVYLPVLHPFTKHYLLFLRYLPDTPMKQNQFGIWEPKLNVQNVLPLNELDILFTPLVAFDKKGNRLGMGGGFYDRTLQNWQNKSFIPVGLAYQCQQVENLPTEHWDVPLFDILVG</sequence>
<keyword id="KW-0067">ATP-binding</keyword>
<keyword id="KW-0436">Ligase</keyword>
<keyword id="KW-0547">Nucleotide-binding</keyword>
<keyword id="KW-1185">Reference proteome</keyword>
<name>5FCL_HAEIN</name>
<protein>
    <recommendedName>
        <fullName>5-formyltetrahydrofolate cyclo-ligase</fullName>
        <shortName>5-FCL</shortName>
        <ecNumber>6.3.3.2</ecNumber>
    </recommendedName>
    <alternativeName>
        <fullName>5,10-methenyltetrahydrofolate synthetase</fullName>
        <shortName>MTHFS</shortName>
    </alternativeName>
</protein>
<feature type="chain" id="PRO_0000200286" description="5-formyltetrahydrofolate cyclo-ligase">
    <location>
        <begin position="1"/>
        <end position="187"/>
    </location>
</feature>
<feature type="binding site" evidence="2">
    <location>
        <begin position="6"/>
        <end position="10"/>
    </location>
    <ligand>
        <name>ATP</name>
        <dbReference type="ChEBI" id="CHEBI:30616"/>
    </ligand>
</feature>
<feature type="binding site" evidence="2">
    <location>
        <begin position="139"/>
        <end position="146"/>
    </location>
    <ligand>
        <name>ATP</name>
        <dbReference type="ChEBI" id="CHEBI:30616"/>
    </ligand>
</feature>
<feature type="binding site" evidence="2">
    <location>
        <position position="178"/>
    </location>
    <ligand>
        <name>ATP</name>
        <dbReference type="ChEBI" id="CHEBI:30616"/>
    </ligand>
</feature>
<evidence type="ECO:0000250" key="1"/>
<evidence type="ECO:0000255" key="2"/>
<evidence type="ECO:0000305" key="3"/>
<accession>P44905</accession>
<proteinExistence type="evidence at protein level"/>
<dbReference type="EC" id="6.3.3.2"/>
<dbReference type="EMBL" id="L42023">
    <property type="protein sequence ID" value="AAC22517.1"/>
    <property type="molecule type" value="Genomic_DNA"/>
</dbReference>
<dbReference type="PIR" id="D64160">
    <property type="entry name" value="D64160"/>
</dbReference>
<dbReference type="RefSeq" id="NP_439018.1">
    <property type="nucleotide sequence ID" value="NC_000907.1"/>
</dbReference>
<dbReference type="SMR" id="P44905"/>
<dbReference type="STRING" id="71421.HI_0858"/>
<dbReference type="EnsemblBacteria" id="AAC22517">
    <property type="protein sequence ID" value="AAC22517"/>
    <property type="gene ID" value="HI_0858"/>
</dbReference>
<dbReference type="KEGG" id="hin:HI_0858"/>
<dbReference type="PATRIC" id="fig|71421.8.peg.899"/>
<dbReference type="eggNOG" id="COG0212">
    <property type="taxonomic scope" value="Bacteria"/>
</dbReference>
<dbReference type="HOGENOM" id="CLU_066245_0_0_6"/>
<dbReference type="OrthoDB" id="9801938at2"/>
<dbReference type="PhylomeDB" id="P44905"/>
<dbReference type="BioCyc" id="HINF71421:G1GJ1-899-MONOMER"/>
<dbReference type="UniPathway" id="UPA00193"/>
<dbReference type="Proteomes" id="UP000000579">
    <property type="component" value="Chromosome"/>
</dbReference>
<dbReference type="GO" id="GO:0005737">
    <property type="term" value="C:cytoplasm"/>
    <property type="evidence" value="ECO:0000318"/>
    <property type="project" value="GO_Central"/>
</dbReference>
<dbReference type="GO" id="GO:0030272">
    <property type="term" value="F:5-formyltetrahydrofolate cyclo-ligase activity"/>
    <property type="evidence" value="ECO:0000318"/>
    <property type="project" value="GO_Central"/>
</dbReference>
<dbReference type="GO" id="GO:0005524">
    <property type="term" value="F:ATP binding"/>
    <property type="evidence" value="ECO:0007669"/>
    <property type="project" value="UniProtKB-KW"/>
</dbReference>
<dbReference type="GO" id="GO:0009396">
    <property type="term" value="P:folic acid-containing compound biosynthetic process"/>
    <property type="evidence" value="ECO:0000318"/>
    <property type="project" value="GO_Central"/>
</dbReference>
<dbReference type="GO" id="GO:0035999">
    <property type="term" value="P:tetrahydrofolate interconversion"/>
    <property type="evidence" value="ECO:0000318"/>
    <property type="project" value="GO_Central"/>
</dbReference>
<dbReference type="Gene3D" id="3.40.50.10420">
    <property type="entry name" value="NagB/RpiA/CoA transferase-like"/>
    <property type="match status" value="1"/>
</dbReference>
<dbReference type="InterPro" id="IPR002698">
    <property type="entry name" value="FTHF_cligase"/>
</dbReference>
<dbReference type="InterPro" id="IPR024185">
    <property type="entry name" value="FTHF_cligase-like_sf"/>
</dbReference>
<dbReference type="InterPro" id="IPR037171">
    <property type="entry name" value="NagB/RpiA_transferase-like"/>
</dbReference>
<dbReference type="NCBIfam" id="TIGR02727">
    <property type="entry name" value="MTHFS_bact"/>
    <property type="match status" value="1"/>
</dbReference>
<dbReference type="PANTHER" id="PTHR23407:SF1">
    <property type="entry name" value="5-FORMYLTETRAHYDROFOLATE CYCLO-LIGASE"/>
    <property type="match status" value="1"/>
</dbReference>
<dbReference type="PANTHER" id="PTHR23407">
    <property type="entry name" value="ATPASE INHIBITOR/5-FORMYLTETRAHYDROFOLATE CYCLO-LIGASE"/>
    <property type="match status" value="1"/>
</dbReference>
<dbReference type="Pfam" id="PF01812">
    <property type="entry name" value="5-FTHF_cyc-lig"/>
    <property type="match status" value="1"/>
</dbReference>
<dbReference type="PIRSF" id="PIRSF006806">
    <property type="entry name" value="FTHF_cligase"/>
    <property type="match status" value="1"/>
</dbReference>
<dbReference type="SUPFAM" id="SSF100950">
    <property type="entry name" value="NagB/RpiA/CoA transferase-like"/>
    <property type="match status" value="1"/>
</dbReference>
<organism>
    <name type="scientific">Haemophilus influenzae (strain ATCC 51907 / DSM 11121 / KW20 / Rd)</name>
    <dbReference type="NCBI Taxonomy" id="71421"/>
    <lineage>
        <taxon>Bacteria</taxon>
        <taxon>Pseudomonadati</taxon>
        <taxon>Pseudomonadota</taxon>
        <taxon>Gammaproteobacteria</taxon>
        <taxon>Pasteurellales</taxon>
        <taxon>Pasteurellaceae</taxon>
        <taxon>Haemophilus</taxon>
    </lineage>
</organism>
<gene>
    <name type="ordered locus">HI_0858</name>
</gene>
<comment type="function">
    <text evidence="1">Involved in the removal of 5-formyltetrahydrofolate. In vitro, it is a potent inhibitor of various folate-dependent enzymes in the C1 metabolism network and in vivo it might function as a folate storage. 5-formyltetrahydrofolate is also used as an antifolate rescue agent in cancer chemotherapy. Catalyzes the irreversible ATP-dependent transformation of 5-formyltetrahydrofolate (5-CHO-THF) to form 5,10-methenyltetrahydrofolate (5,10-CH=THF). The reverse reaction is catalyzed by the serine hydroxymethyltransferase GlyA (SHMT) (By similarity).</text>
</comment>
<comment type="catalytic activity">
    <reaction>
        <text>(6S)-5-formyl-5,6,7,8-tetrahydrofolate + ATP = (6R)-5,10-methenyltetrahydrofolate + ADP + phosphate</text>
        <dbReference type="Rhea" id="RHEA:10488"/>
        <dbReference type="ChEBI" id="CHEBI:30616"/>
        <dbReference type="ChEBI" id="CHEBI:43474"/>
        <dbReference type="ChEBI" id="CHEBI:57455"/>
        <dbReference type="ChEBI" id="CHEBI:57457"/>
        <dbReference type="ChEBI" id="CHEBI:456216"/>
        <dbReference type="EC" id="6.3.3.2"/>
    </reaction>
</comment>
<comment type="pathway">
    <text>One-carbon metabolism; tetrahydrofolate interconversion.</text>
</comment>
<comment type="similarity">
    <text evidence="3">Belongs to the 5-formyltetrahydrofolate cyclo-ligase family.</text>
</comment>
<reference key="1">
    <citation type="journal article" date="1995" name="Science">
        <title>Whole-genome random sequencing and assembly of Haemophilus influenzae Rd.</title>
        <authorList>
            <person name="Fleischmann R.D."/>
            <person name="Adams M.D."/>
            <person name="White O."/>
            <person name="Clayton R.A."/>
            <person name="Kirkness E.F."/>
            <person name="Kerlavage A.R."/>
            <person name="Bult C.J."/>
            <person name="Tomb J.-F."/>
            <person name="Dougherty B.A."/>
            <person name="Merrick J.M."/>
            <person name="McKenney K."/>
            <person name="Sutton G.G."/>
            <person name="FitzHugh W."/>
            <person name="Fields C.A."/>
            <person name="Gocayne J.D."/>
            <person name="Scott J.D."/>
            <person name="Shirley R."/>
            <person name="Liu L.-I."/>
            <person name="Glodek A."/>
            <person name="Kelley J.M."/>
            <person name="Weidman J.F."/>
            <person name="Phillips C.A."/>
            <person name="Spriggs T."/>
            <person name="Hedblom E."/>
            <person name="Cotton M.D."/>
            <person name="Utterback T.R."/>
            <person name="Hanna M.C."/>
            <person name="Nguyen D.T."/>
            <person name="Saudek D.M."/>
            <person name="Brandon R.C."/>
            <person name="Fine L.D."/>
            <person name="Fritchman J.L."/>
            <person name="Fuhrmann J.L."/>
            <person name="Geoghagen N.S.M."/>
            <person name="Gnehm C.L."/>
            <person name="McDonald L.A."/>
            <person name="Small K.V."/>
            <person name="Fraser C.M."/>
            <person name="Smith H.O."/>
            <person name="Venter J.C."/>
        </authorList>
    </citation>
    <scope>NUCLEOTIDE SEQUENCE [LARGE SCALE GENOMIC DNA]</scope>
    <source>
        <strain>ATCC 51907 / DSM 11121 / KW20 / Rd</strain>
    </source>
</reference>
<reference key="2">
    <citation type="journal article" date="2000" name="Electrophoresis">
        <title>Two-dimensional map of the proteome of Haemophilus influenzae.</title>
        <authorList>
            <person name="Langen H."/>
            <person name="Takacs B."/>
            <person name="Evers S."/>
            <person name="Berndt P."/>
            <person name="Lahm H.W."/>
            <person name="Wipf B."/>
            <person name="Gray C."/>
            <person name="Fountoulakis M."/>
        </authorList>
    </citation>
    <scope>IDENTIFICATION BY MASS SPECTROMETRY</scope>
    <source>
        <strain>ATCC 51907 / DSM 11121 / KW20 / Rd</strain>
    </source>
</reference>